<feature type="chain" id="PRO_0000107113" description="Uncharacterized protein MJ0939">
    <location>
        <begin position="1"/>
        <end position="276"/>
    </location>
</feature>
<keyword id="KW-1185">Reference proteome</keyword>
<accession>Q58349</accession>
<protein>
    <recommendedName>
        <fullName>Uncharacterized protein MJ0939</fullName>
    </recommendedName>
</protein>
<proteinExistence type="predicted"/>
<name>Y939_METJA</name>
<organism>
    <name type="scientific">Methanocaldococcus jannaschii (strain ATCC 43067 / DSM 2661 / JAL-1 / JCM 10045 / NBRC 100440)</name>
    <name type="common">Methanococcus jannaschii</name>
    <dbReference type="NCBI Taxonomy" id="243232"/>
    <lineage>
        <taxon>Archaea</taxon>
        <taxon>Methanobacteriati</taxon>
        <taxon>Methanobacteriota</taxon>
        <taxon>Methanomada group</taxon>
        <taxon>Methanococci</taxon>
        <taxon>Methanococcales</taxon>
        <taxon>Methanocaldococcaceae</taxon>
        <taxon>Methanocaldococcus</taxon>
    </lineage>
</organism>
<gene>
    <name type="ordered locus">MJ0939</name>
</gene>
<reference key="1">
    <citation type="journal article" date="1996" name="Science">
        <title>Complete genome sequence of the methanogenic archaeon, Methanococcus jannaschii.</title>
        <authorList>
            <person name="Bult C.J."/>
            <person name="White O."/>
            <person name="Olsen G.J."/>
            <person name="Zhou L."/>
            <person name="Fleischmann R.D."/>
            <person name="Sutton G.G."/>
            <person name="Blake J.A."/>
            <person name="FitzGerald L.M."/>
            <person name="Clayton R.A."/>
            <person name="Gocayne J.D."/>
            <person name="Kerlavage A.R."/>
            <person name="Dougherty B.A."/>
            <person name="Tomb J.-F."/>
            <person name="Adams M.D."/>
            <person name="Reich C.I."/>
            <person name="Overbeek R."/>
            <person name="Kirkness E.F."/>
            <person name="Weinstock K.G."/>
            <person name="Merrick J.M."/>
            <person name="Glodek A."/>
            <person name="Scott J.L."/>
            <person name="Geoghagen N.S.M."/>
            <person name="Weidman J.F."/>
            <person name="Fuhrmann J.L."/>
            <person name="Nguyen D."/>
            <person name="Utterback T.R."/>
            <person name="Kelley J.M."/>
            <person name="Peterson J.D."/>
            <person name="Sadow P.W."/>
            <person name="Hanna M.C."/>
            <person name="Cotton M.D."/>
            <person name="Roberts K.M."/>
            <person name="Hurst M.A."/>
            <person name="Kaine B.P."/>
            <person name="Borodovsky M."/>
            <person name="Klenk H.-P."/>
            <person name="Fraser C.M."/>
            <person name="Smith H.O."/>
            <person name="Woese C.R."/>
            <person name="Venter J.C."/>
        </authorList>
    </citation>
    <scope>NUCLEOTIDE SEQUENCE [LARGE SCALE GENOMIC DNA]</scope>
    <source>
        <strain>ATCC 43067 / DSM 2661 / JAL-1 / JCM 10045 / NBRC 100440</strain>
    </source>
</reference>
<sequence length="276" mass="33454">MMPMDWEITFKGITYECINCAYCCSCKGWRIYLNYFDRLKLKDYEYAIEPCEGEFKYRLKVNEKGCVLLNNNLCRIHLEKGYEFKPLMCMIFPFSCMIKWDGTPLLIIKHYCSGIKKGKISKKVVNEAIELIKELYFDMFEEIIENGMEHSSKTEIFENFRVDWEEREDFGRYIFSSKTFDEMFERCREIFGNKINKLNLEEIDEIKNNLQRYNTKENEEEILRYLLELNRREHFRKLPFYREVNKLINIGNYLTKYKNVFKGEGEVDKKLFLNLK</sequence>
<dbReference type="EMBL" id="L77117">
    <property type="protein sequence ID" value="AAB98946.1"/>
    <property type="molecule type" value="Genomic_DNA"/>
</dbReference>
<dbReference type="PIR" id="C64417">
    <property type="entry name" value="C64417"/>
</dbReference>
<dbReference type="SMR" id="Q58349"/>
<dbReference type="STRING" id="243232.MJ_0939"/>
<dbReference type="PaxDb" id="243232-MJ_0939"/>
<dbReference type="EnsemblBacteria" id="AAB98946">
    <property type="protein sequence ID" value="AAB98946"/>
    <property type="gene ID" value="MJ_0939"/>
</dbReference>
<dbReference type="KEGG" id="mja:MJ_0939"/>
<dbReference type="eggNOG" id="arCOG05059">
    <property type="taxonomic scope" value="Archaea"/>
</dbReference>
<dbReference type="HOGENOM" id="CLU_1021630_0_0_2"/>
<dbReference type="InParanoid" id="Q58349"/>
<dbReference type="Proteomes" id="UP000000805">
    <property type="component" value="Chromosome"/>
</dbReference>
<dbReference type="InterPro" id="IPR005358">
    <property type="entry name" value="Puta_zinc/iron-chelating_dom"/>
</dbReference>
<dbReference type="Pfam" id="PF03692">
    <property type="entry name" value="CxxCxxCC"/>
    <property type="match status" value="1"/>
</dbReference>